<name>NAA40_SCHPO</name>
<feature type="chain" id="PRO_0000310299" description="N-alpha-acetyltransferase 40">
    <location>
        <begin position="1"/>
        <end position="204"/>
    </location>
</feature>
<feature type="domain" description="N-acetyltransferase" evidence="3">
    <location>
        <begin position="39"/>
        <end position="202"/>
    </location>
</feature>
<feature type="binding site" evidence="2">
    <location>
        <position position="64"/>
    </location>
    <ligand>
        <name>substrate</name>
    </ligand>
</feature>
<feature type="binding site" evidence="2">
    <location>
        <begin position="107"/>
        <end position="109"/>
    </location>
    <ligand>
        <name>substrate</name>
    </ligand>
</feature>
<feature type="binding site" evidence="2">
    <location>
        <position position="118"/>
    </location>
    <ligand>
        <name>substrate</name>
    </ligand>
</feature>
<feature type="binding site" evidence="5 7">
    <location>
        <begin position="120"/>
        <end position="122"/>
    </location>
    <ligand>
        <name>acetyl-CoA</name>
        <dbReference type="ChEBI" id="CHEBI:57288"/>
    </ligand>
</feature>
<feature type="binding site" evidence="5 7">
    <location>
        <begin position="128"/>
        <end position="133"/>
    </location>
    <ligand>
        <name>acetyl-CoA</name>
        <dbReference type="ChEBI" id="CHEBI:57288"/>
    </ligand>
</feature>
<feature type="binding site" evidence="2">
    <location>
        <position position="154"/>
    </location>
    <ligand>
        <name>substrate</name>
    </ligand>
</feature>
<feature type="binding site" evidence="5 7">
    <location>
        <position position="159"/>
    </location>
    <ligand>
        <name>acetyl-CoA</name>
        <dbReference type="ChEBI" id="CHEBI:57288"/>
    </ligand>
</feature>
<feature type="binding site" evidence="2">
    <location>
        <position position="176"/>
    </location>
    <ligand>
        <name>substrate</name>
    </ligand>
</feature>
<feature type="site" description="Essential for catalytic activity" evidence="2">
    <location>
        <position position="119"/>
    </location>
</feature>
<feature type="helix" evidence="9">
    <location>
        <begin position="28"/>
        <end position="32"/>
    </location>
</feature>
<feature type="turn" evidence="9">
    <location>
        <begin position="33"/>
        <end position="35"/>
    </location>
</feature>
<feature type="strand" evidence="9">
    <location>
        <begin position="36"/>
        <end position="43"/>
    </location>
</feature>
<feature type="helix" evidence="9">
    <location>
        <begin position="46"/>
        <end position="66"/>
    </location>
</feature>
<feature type="helix" evidence="9">
    <location>
        <begin position="73"/>
        <end position="80"/>
    </location>
</feature>
<feature type="strand" evidence="9">
    <location>
        <begin position="86"/>
        <end position="92"/>
    </location>
</feature>
<feature type="turn" evidence="9">
    <location>
        <begin position="93"/>
        <end position="95"/>
    </location>
</feature>
<feature type="strand" evidence="9">
    <location>
        <begin position="98"/>
        <end position="109"/>
    </location>
</feature>
<feature type="strand" evidence="9">
    <location>
        <begin position="112"/>
        <end position="122"/>
    </location>
</feature>
<feature type="helix" evidence="9">
    <location>
        <begin position="124"/>
        <end position="126"/>
    </location>
</feature>
<feature type="helix" evidence="9">
    <location>
        <begin position="131"/>
        <end position="145"/>
    </location>
</feature>
<feature type="strand" evidence="9">
    <location>
        <begin position="150"/>
        <end position="156"/>
    </location>
</feature>
<feature type="helix" evidence="9">
    <location>
        <begin position="160"/>
        <end position="168"/>
    </location>
</feature>
<feature type="strand" evidence="9">
    <location>
        <begin position="192"/>
        <end position="199"/>
    </location>
</feature>
<protein>
    <recommendedName>
        <fullName evidence="8">N-alpha-acetyltransferase 40</fullName>
        <ecNumber evidence="1 2">2.3.1.257</ecNumber>
    </recommendedName>
</protein>
<reference key="1">
    <citation type="journal article" date="2002" name="Nature">
        <title>The genome sequence of Schizosaccharomyces pombe.</title>
        <authorList>
            <person name="Wood V."/>
            <person name="Gwilliam R."/>
            <person name="Rajandream M.A."/>
            <person name="Lyne M.H."/>
            <person name="Lyne R."/>
            <person name="Stewart A."/>
            <person name="Sgouros J.G."/>
            <person name="Peat N."/>
            <person name="Hayles J."/>
            <person name="Baker S.G."/>
            <person name="Basham D."/>
            <person name="Bowman S."/>
            <person name="Brooks K."/>
            <person name="Brown D."/>
            <person name="Brown S."/>
            <person name="Chillingworth T."/>
            <person name="Churcher C.M."/>
            <person name="Collins M."/>
            <person name="Connor R."/>
            <person name="Cronin A."/>
            <person name="Davis P."/>
            <person name="Feltwell T."/>
            <person name="Fraser A."/>
            <person name="Gentles S."/>
            <person name="Goble A."/>
            <person name="Hamlin N."/>
            <person name="Harris D.E."/>
            <person name="Hidalgo J."/>
            <person name="Hodgson G."/>
            <person name="Holroyd S."/>
            <person name="Hornsby T."/>
            <person name="Howarth S."/>
            <person name="Huckle E.J."/>
            <person name="Hunt S."/>
            <person name="Jagels K."/>
            <person name="James K.D."/>
            <person name="Jones L."/>
            <person name="Jones M."/>
            <person name="Leather S."/>
            <person name="McDonald S."/>
            <person name="McLean J."/>
            <person name="Mooney P."/>
            <person name="Moule S."/>
            <person name="Mungall K.L."/>
            <person name="Murphy L.D."/>
            <person name="Niblett D."/>
            <person name="Odell C."/>
            <person name="Oliver K."/>
            <person name="O'Neil S."/>
            <person name="Pearson D."/>
            <person name="Quail M.A."/>
            <person name="Rabbinowitsch E."/>
            <person name="Rutherford K.M."/>
            <person name="Rutter S."/>
            <person name="Saunders D."/>
            <person name="Seeger K."/>
            <person name="Sharp S."/>
            <person name="Skelton J."/>
            <person name="Simmonds M.N."/>
            <person name="Squares R."/>
            <person name="Squares S."/>
            <person name="Stevens K."/>
            <person name="Taylor K."/>
            <person name="Taylor R.G."/>
            <person name="Tivey A."/>
            <person name="Walsh S.V."/>
            <person name="Warren T."/>
            <person name="Whitehead S."/>
            <person name="Woodward J.R."/>
            <person name="Volckaert G."/>
            <person name="Aert R."/>
            <person name="Robben J."/>
            <person name="Grymonprez B."/>
            <person name="Weltjens I."/>
            <person name="Vanstreels E."/>
            <person name="Rieger M."/>
            <person name="Schaefer M."/>
            <person name="Mueller-Auer S."/>
            <person name="Gabel C."/>
            <person name="Fuchs M."/>
            <person name="Duesterhoeft A."/>
            <person name="Fritzc C."/>
            <person name="Holzer E."/>
            <person name="Moestl D."/>
            <person name="Hilbert H."/>
            <person name="Borzym K."/>
            <person name="Langer I."/>
            <person name="Beck A."/>
            <person name="Lehrach H."/>
            <person name="Reinhardt R."/>
            <person name="Pohl T.M."/>
            <person name="Eger P."/>
            <person name="Zimmermann W."/>
            <person name="Wedler H."/>
            <person name="Wambutt R."/>
            <person name="Purnelle B."/>
            <person name="Goffeau A."/>
            <person name="Cadieu E."/>
            <person name="Dreano S."/>
            <person name="Gloux S."/>
            <person name="Lelaure V."/>
            <person name="Mottier S."/>
            <person name="Galibert F."/>
            <person name="Aves S.J."/>
            <person name="Xiang Z."/>
            <person name="Hunt C."/>
            <person name="Moore K."/>
            <person name="Hurst S.M."/>
            <person name="Lucas M."/>
            <person name="Rochet M."/>
            <person name="Gaillardin C."/>
            <person name="Tallada V.A."/>
            <person name="Garzon A."/>
            <person name="Thode G."/>
            <person name="Daga R.R."/>
            <person name="Cruzado L."/>
            <person name="Jimenez J."/>
            <person name="Sanchez M."/>
            <person name="del Rey F."/>
            <person name="Benito J."/>
            <person name="Dominguez A."/>
            <person name="Revuelta J.L."/>
            <person name="Moreno S."/>
            <person name="Armstrong J."/>
            <person name="Forsburg S.L."/>
            <person name="Cerutti L."/>
            <person name="Lowe T."/>
            <person name="McCombie W.R."/>
            <person name="Paulsen I."/>
            <person name="Potashkin J."/>
            <person name="Shpakovski G.V."/>
            <person name="Ussery D."/>
            <person name="Barrell B.G."/>
            <person name="Nurse P."/>
        </authorList>
    </citation>
    <scope>NUCLEOTIDE SEQUENCE [LARGE SCALE GENOMIC DNA]</scope>
    <source>
        <strain>972 / ATCC 24843</strain>
    </source>
</reference>
<reference key="2">
    <citation type="journal article" date="2006" name="Nat. Biotechnol.">
        <title>ORFeome cloning and global analysis of protein localization in the fission yeast Schizosaccharomyces pombe.</title>
        <authorList>
            <person name="Matsuyama A."/>
            <person name="Arai R."/>
            <person name="Yashiroda Y."/>
            <person name="Shirai A."/>
            <person name="Kamata A."/>
            <person name="Sekido S."/>
            <person name="Kobayashi Y."/>
            <person name="Hashimoto A."/>
            <person name="Hamamoto M."/>
            <person name="Hiraoka Y."/>
            <person name="Horinouchi S."/>
            <person name="Yoshida M."/>
        </authorList>
    </citation>
    <scope>SUBCELLULAR LOCATION [LARGE SCALE ANALYSIS]</scope>
</reference>
<reference evidence="7" key="3">
    <citation type="journal article" date="2015" name="Structure">
        <title>The molecular basis for histone H4- and H2A-specific amino-terminal acetylation by NatD.</title>
        <authorList>
            <person name="Magin R.S."/>
            <person name="Liszczak G.P."/>
            <person name="Marmorstein R."/>
        </authorList>
    </citation>
    <scope>X-RAY CRYSTALLOGRAPHY (1.85 ANGSTROMS) OF 13-204 IN COMPLEX WITH ACETYL-COA</scope>
</reference>
<comment type="function">
    <text evidence="1 2">N-alpha-acetyltransferase that specifically mediates the acetylation of the N-terminal residues of histones H4 and H2A.</text>
</comment>
<comment type="catalytic activity">
    <reaction evidence="1 2">
        <text>N-terminal L-seryl-[histone H4] + acetyl-CoA = N-terminal N(alpha)-acetyl-L-seryl-[histone H4] + CoA + H(+)</text>
        <dbReference type="Rhea" id="RHEA:50596"/>
        <dbReference type="Rhea" id="RHEA-COMP:12740"/>
        <dbReference type="Rhea" id="RHEA-COMP:12743"/>
        <dbReference type="ChEBI" id="CHEBI:15378"/>
        <dbReference type="ChEBI" id="CHEBI:57287"/>
        <dbReference type="ChEBI" id="CHEBI:57288"/>
        <dbReference type="ChEBI" id="CHEBI:64738"/>
        <dbReference type="ChEBI" id="CHEBI:83690"/>
        <dbReference type="EC" id="2.3.1.257"/>
    </reaction>
</comment>
<comment type="catalytic activity">
    <reaction evidence="1 2">
        <text>N-terminal L-seryl-[histone H2A] + acetyl-CoA = N-terminal N(alpha)-acetyl-L-seryl-[histone H2A] + CoA + H(+)</text>
        <dbReference type="Rhea" id="RHEA:50600"/>
        <dbReference type="Rhea" id="RHEA-COMP:12742"/>
        <dbReference type="Rhea" id="RHEA-COMP:12744"/>
        <dbReference type="ChEBI" id="CHEBI:15378"/>
        <dbReference type="ChEBI" id="CHEBI:57287"/>
        <dbReference type="ChEBI" id="CHEBI:57288"/>
        <dbReference type="ChEBI" id="CHEBI:64738"/>
        <dbReference type="ChEBI" id="CHEBI:83690"/>
        <dbReference type="EC" id="2.3.1.257"/>
    </reaction>
</comment>
<comment type="subcellular location">
    <subcellularLocation>
        <location evidence="4">Cytoplasm</location>
    </subcellularLocation>
    <subcellularLocation>
        <location evidence="4">Nucleus</location>
    </subcellularLocation>
</comment>
<comment type="similarity">
    <text evidence="6">Belongs to the acetyltransferase family. NAA40 subfamily.</text>
</comment>
<keyword id="KW-0002">3D-structure</keyword>
<keyword id="KW-0012">Acyltransferase</keyword>
<keyword id="KW-0963">Cytoplasm</keyword>
<keyword id="KW-0539">Nucleus</keyword>
<keyword id="KW-1185">Reference proteome</keyword>
<keyword id="KW-0808">Transferase</keyword>
<proteinExistence type="evidence at protein level"/>
<accession>Q9USH6</accession>
<organism>
    <name type="scientific">Schizosaccharomyces pombe (strain 972 / ATCC 24843)</name>
    <name type="common">Fission yeast</name>
    <dbReference type="NCBI Taxonomy" id="284812"/>
    <lineage>
        <taxon>Eukaryota</taxon>
        <taxon>Fungi</taxon>
        <taxon>Dikarya</taxon>
        <taxon>Ascomycota</taxon>
        <taxon>Taphrinomycotina</taxon>
        <taxon>Schizosaccharomycetes</taxon>
        <taxon>Schizosaccharomycetales</taxon>
        <taxon>Schizosaccharomycetaceae</taxon>
        <taxon>Schizosaccharomyces</taxon>
    </lineage>
</organism>
<gene>
    <name evidence="8" type="primary">naa40</name>
    <name type="ORF">SPCC825.04c</name>
</gene>
<evidence type="ECO:0000250" key="1">
    <source>
        <dbReference type="UniProtKB" id="Q04751"/>
    </source>
</evidence>
<evidence type="ECO:0000250" key="2">
    <source>
        <dbReference type="UniProtKB" id="Q86UY6"/>
    </source>
</evidence>
<evidence type="ECO:0000255" key="3">
    <source>
        <dbReference type="PROSITE-ProRule" id="PRU00532"/>
    </source>
</evidence>
<evidence type="ECO:0000269" key="4">
    <source>
    </source>
</evidence>
<evidence type="ECO:0000269" key="5">
    <source>
    </source>
</evidence>
<evidence type="ECO:0000305" key="6"/>
<evidence type="ECO:0000312" key="7">
    <source>
        <dbReference type="PDB" id="4UA3"/>
    </source>
</evidence>
<evidence type="ECO:0000312" key="8">
    <source>
        <dbReference type="PomBase" id="SPCC825.04c"/>
    </source>
</evidence>
<evidence type="ECO:0007829" key="9">
    <source>
        <dbReference type="PDB" id="4UA3"/>
    </source>
</evidence>
<dbReference type="EC" id="2.3.1.257" evidence="1 2"/>
<dbReference type="EMBL" id="CU329672">
    <property type="protein sequence ID" value="CAB58412.1"/>
    <property type="molecule type" value="Genomic_DNA"/>
</dbReference>
<dbReference type="PIR" id="T41625">
    <property type="entry name" value="T41625"/>
</dbReference>
<dbReference type="RefSeq" id="NP_588054.1">
    <property type="nucleotide sequence ID" value="NM_001023046.2"/>
</dbReference>
<dbReference type="PDB" id="4UA3">
    <property type="method" value="X-ray"/>
    <property type="resolution" value="1.85 A"/>
    <property type="chains" value="A/B=13-204"/>
</dbReference>
<dbReference type="PDBsum" id="4UA3"/>
<dbReference type="SMR" id="Q9USH6"/>
<dbReference type="BioGRID" id="276011">
    <property type="interactions" value="11"/>
</dbReference>
<dbReference type="FunCoup" id="Q9USH6">
    <property type="interactions" value="792"/>
</dbReference>
<dbReference type="STRING" id="284812.Q9USH6"/>
<dbReference type="PaxDb" id="4896-SPCC825.04c.1"/>
<dbReference type="EnsemblFungi" id="SPCC825.04c.1">
    <property type="protein sequence ID" value="SPCC825.04c.1:pep"/>
    <property type="gene ID" value="SPCC825.04c"/>
</dbReference>
<dbReference type="GeneID" id="2539448"/>
<dbReference type="KEGG" id="spo:2539448"/>
<dbReference type="PomBase" id="SPCC825.04c">
    <property type="gene designation" value="naa40"/>
</dbReference>
<dbReference type="VEuPathDB" id="FungiDB:SPCC825.04c"/>
<dbReference type="eggNOG" id="KOG2488">
    <property type="taxonomic scope" value="Eukaryota"/>
</dbReference>
<dbReference type="HOGENOM" id="CLU_051699_2_2_1"/>
<dbReference type="InParanoid" id="Q9USH6"/>
<dbReference type="OMA" id="ETNVGPY"/>
<dbReference type="PhylomeDB" id="Q9USH6"/>
<dbReference type="EvolutionaryTrace" id="Q9USH6"/>
<dbReference type="PRO" id="PR:Q9USH6"/>
<dbReference type="Proteomes" id="UP000002485">
    <property type="component" value="Chromosome III"/>
</dbReference>
<dbReference type="GO" id="GO:0032153">
    <property type="term" value="C:cell division site"/>
    <property type="evidence" value="ECO:0007005"/>
    <property type="project" value="PomBase"/>
</dbReference>
<dbReference type="GO" id="GO:0005737">
    <property type="term" value="C:cytoplasm"/>
    <property type="evidence" value="ECO:0007005"/>
    <property type="project" value="PomBase"/>
</dbReference>
<dbReference type="GO" id="GO:0005829">
    <property type="term" value="C:cytosol"/>
    <property type="evidence" value="ECO:0007005"/>
    <property type="project" value="PomBase"/>
</dbReference>
<dbReference type="GO" id="GO:0005634">
    <property type="term" value="C:nucleus"/>
    <property type="evidence" value="ECO:0007005"/>
    <property type="project" value="PomBase"/>
</dbReference>
<dbReference type="GO" id="GO:0043998">
    <property type="term" value="F:histone H2A acetyltransferase activity"/>
    <property type="evidence" value="ECO:0000250"/>
    <property type="project" value="UniProtKB"/>
</dbReference>
<dbReference type="GO" id="GO:0010485">
    <property type="term" value="F:histone H4 acetyltransferase activity"/>
    <property type="evidence" value="ECO:0000250"/>
    <property type="project" value="UniProtKB"/>
</dbReference>
<dbReference type="GO" id="GO:1990189">
    <property type="term" value="F:protein N-terminal-serine acetyltransferase activity"/>
    <property type="evidence" value="ECO:0000269"/>
    <property type="project" value="PomBase"/>
</dbReference>
<dbReference type="GO" id="GO:0051604">
    <property type="term" value="P:protein maturation"/>
    <property type="evidence" value="ECO:0000269"/>
    <property type="project" value="PomBase"/>
</dbReference>
<dbReference type="CDD" id="cd04301">
    <property type="entry name" value="NAT_SF"/>
    <property type="match status" value="1"/>
</dbReference>
<dbReference type="Gene3D" id="3.40.630.30">
    <property type="match status" value="1"/>
</dbReference>
<dbReference type="InterPro" id="IPR016181">
    <property type="entry name" value="Acyl_CoA_acyltransferase"/>
</dbReference>
<dbReference type="InterPro" id="IPR000182">
    <property type="entry name" value="GNAT_dom"/>
</dbReference>
<dbReference type="InterPro" id="IPR039949">
    <property type="entry name" value="NAA40"/>
</dbReference>
<dbReference type="PANTHER" id="PTHR20531">
    <property type="entry name" value="N-ALPHA-ACETYLTRANSFERASE 40"/>
    <property type="match status" value="1"/>
</dbReference>
<dbReference type="PANTHER" id="PTHR20531:SF1">
    <property type="entry name" value="N-ALPHA-ACETYLTRANSFERASE 40"/>
    <property type="match status" value="1"/>
</dbReference>
<dbReference type="Pfam" id="PF00583">
    <property type="entry name" value="Acetyltransf_1"/>
    <property type="match status" value="1"/>
</dbReference>
<dbReference type="SUPFAM" id="SSF55729">
    <property type="entry name" value="Acyl-CoA N-acyltransferases (Nat)"/>
    <property type="match status" value="1"/>
</dbReference>
<dbReference type="PROSITE" id="PS51186">
    <property type="entry name" value="GNAT"/>
    <property type="match status" value="1"/>
</dbReference>
<sequence>MHFLKQYLFYSPRRMKTQEIKNVTLEDVDFLKNLGVWVEIYHHLEKGLLQQCFNLVKKNMEALYRQSSFGWDDSEKLKEMEMEKLEYICIFEKTSKKLVGFLSFEDTVEAGLTCLYIYEIQLDEHIRGRNVGKWLLKNASILAYRRNLKYIFLTVFSANLNALNFYHHFDFVPHESSPQEKKFRSGKVIHPDYYILYTKSRKDW</sequence>